<comment type="function">
    <text evidence="1">Catalyzes the hydrolysis of UDP-3-O-myristoyl-N-acetylglucosamine to form UDP-3-O-myristoylglucosamine and acetate, the committed step in lipid A biosynthesis.</text>
</comment>
<comment type="catalytic activity">
    <reaction evidence="1">
        <text>a UDP-3-O-[(3R)-3-hydroxyacyl]-N-acetyl-alpha-D-glucosamine + H2O = a UDP-3-O-[(3R)-3-hydroxyacyl]-alpha-D-glucosamine + acetate</text>
        <dbReference type="Rhea" id="RHEA:67816"/>
        <dbReference type="ChEBI" id="CHEBI:15377"/>
        <dbReference type="ChEBI" id="CHEBI:30089"/>
        <dbReference type="ChEBI" id="CHEBI:137740"/>
        <dbReference type="ChEBI" id="CHEBI:173225"/>
        <dbReference type="EC" id="3.5.1.108"/>
    </reaction>
</comment>
<comment type="cofactor">
    <cofactor evidence="1">
        <name>Zn(2+)</name>
        <dbReference type="ChEBI" id="CHEBI:29105"/>
    </cofactor>
</comment>
<comment type="pathway">
    <text evidence="1">Glycolipid biosynthesis; lipid IV(A) biosynthesis; lipid IV(A) from (3R)-3-hydroxytetradecanoyl-[acyl-carrier-protein] and UDP-N-acetyl-alpha-D-glucosamine: step 2/6.</text>
</comment>
<comment type="similarity">
    <text evidence="1">Belongs to the LpxC family.</text>
</comment>
<dbReference type="EC" id="3.5.1.108" evidence="1"/>
<dbReference type="EMBL" id="AE017125">
    <property type="protein sequence ID" value="AAP77612.1"/>
    <property type="molecule type" value="Genomic_DNA"/>
</dbReference>
<dbReference type="RefSeq" id="WP_011115855.1">
    <property type="nucleotide sequence ID" value="NC_004917.1"/>
</dbReference>
<dbReference type="SMR" id="Q7VHF2"/>
<dbReference type="STRING" id="235279.HH_1015"/>
<dbReference type="KEGG" id="hhe:HH_1015"/>
<dbReference type="eggNOG" id="COG0774">
    <property type="taxonomic scope" value="Bacteria"/>
</dbReference>
<dbReference type="HOGENOM" id="CLU_046528_1_0_7"/>
<dbReference type="OrthoDB" id="9802746at2"/>
<dbReference type="UniPathway" id="UPA00359">
    <property type="reaction ID" value="UER00478"/>
</dbReference>
<dbReference type="Proteomes" id="UP000002495">
    <property type="component" value="Chromosome"/>
</dbReference>
<dbReference type="GO" id="GO:0016020">
    <property type="term" value="C:membrane"/>
    <property type="evidence" value="ECO:0007669"/>
    <property type="project" value="GOC"/>
</dbReference>
<dbReference type="GO" id="GO:0046872">
    <property type="term" value="F:metal ion binding"/>
    <property type="evidence" value="ECO:0007669"/>
    <property type="project" value="UniProtKB-KW"/>
</dbReference>
<dbReference type="GO" id="GO:0103117">
    <property type="term" value="F:UDP-3-O-acyl-N-acetylglucosamine deacetylase activity"/>
    <property type="evidence" value="ECO:0007669"/>
    <property type="project" value="UniProtKB-UniRule"/>
</dbReference>
<dbReference type="GO" id="GO:0009245">
    <property type="term" value="P:lipid A biosynthetic process"/>
    <property type="evidence" value="ECO:0007669"/>
    <property type="project" value="UniProtKB-UniRule"/>
</dbReference>
<dbReference type="Gene3D" id="3.30.230.20">
    <property type="entry name" value="lpxc deacetylase, domain 1"/>
    <property type="match status" value="1"/>
</dbReference>
<dbReference type="Gene3D" id="3.30.1700.10">
    <property type="entry name" value="lpxc deacetylase, domain 2"/>
    <property type="match status" value="1"/>
</dbReference>
<dbReference type="HAMAP" id="MF_00388">
    <property type="entry name" value="LpxC"/>
    <property type="match status" value="1"/>
</dbReference>
<dbReference type="InterPro" id="IPR020568">
    <property type="entry name" value="Ribosomal_Su5_D2-typ_SF"/>
</dbReference>
<dbReference type="InterPro" id="IPR004463">
    <property type="entry name" value="UDP-acyl_GlcNac_deAcase"/>
</dbReference>
<dbReference type="InterPro" id="IPR011334">
    <property type="entry name" value="UDP-acyl_GlcNac_deAcase_C"/>
</dbReference>
<dbReference type="InterPro" id="IPR015870">
    <property type="entry name" value="UDP-acyl_N-AcGlcN_deAcase_N"/>
</dbReference>
<dbReference type="NCBIfam" id="TIGR00325">
    <property type="entry name" value="lpxC"/>
    <property type="match status" value="1"/>
</dbReference>
<dbReference type="PANTHER" id="PTHR33694">
    <property type="entry name" value="UDP-3-O-ACYL-N-ACETYLGLUCOSAMINE DEACETYLASE 1, MITOCHONDRIAL-RELATED"/>
    <property type="match status" value="1"/>
</dbReference>
<dbReference type="PANTHER" id="PTHR33694:SF1">
    <property type="entry name" value="UDP-3-O-ACYL-N-ACETYLGLUCOSAMINE DEACETYLASE 1, MITOCHONDRIAL-RELATED"/>
    <property type="match status" value="1"/>
</dbReference>
<dbReference type="Pfam" id="PF03331">
    <property type="entry name" value="LpxC"/>
    <property type="match status" value="1"/>
</dbReference>
<dbReference type="SUPFAM" id="SSF54211">
    <property type="entry name" value="Ribosomal protein S5 domain 2-like"/>
    <property type="match status" value="2"/>
</dbReference>
<gene>
    <name evidence="1" type="primary">lpxC</name>
    <name type="ordered locus">HH_1015</name>
</gene>
<sequence>MKQKTIKNKVELVGIGLHKGVPVKMELEPLEVDSGIVFYRSDLGVSIEFKAENVIDTTMATVIAKGEAKISTIEHLLSAIHAYGIDNIRISLDNEEVPIMDGSAIGYCMLLEEAGIVAQNAPKKAIVIKKSIEIVDEKKFVRVEPSERTIFDFKIDFNHPVIRQQHYKFTFSTQAYKEEIARARTFGFLHEVNYLRSKGLAKGGDLSNCIVLDESSILNKEGLRYKEEFVRHKILDAIGDMALLGMPLLGSYISFAGSHKLNHLLTKQILSDEKAYEVVSLEDKVEEAALDYAFLHEQH</sequence>
<accession>Q7VHF2</accession>
<evidence type="ECO:0000255" key="1">
    <source>
        <dbReference type="HAMAP-Rule" id="MF_00388"/>
    </source>
</evidence>
<reference key="1">
    <citation type="journal article" date="2003" name="Proc. Natl. Acad. Sci. U.S.A.">
        <title>The complete genome sequence of the carcinogenic bacterium Helicobacter hepaticus.</title>
        <authorList>
            <person name="Suerbaum S."/>
            <person name="Josenhans C."/>
            <person name="Sterzenbach T."/>
            <person name="Drescher B."/>
            <person name="Brandt P."/>
            <person name="Bell M."/>
            <person name="Droege M."/>
            <person name="Fartmann B."/>
            <person name="Fischer H.-P."/>
            <person name="Ge Z."/>
            <person name="Hoerster A."/>
            <person name="Holland R."/>
            <person name="Klein K."/>
            <person name="Koenig J."/>
            <person name="Macko L."/>
            <person name="Mendz G.L."/>
            <person name="Nyakatura G."/>
            <person name="Schauer D.B."/>
            <person name="Shen Z."/>
            <person name="Weber J."/>
            <person name="Frosch M."/>
            <person name="Fox J.G."/>
        </authorList>
    </citation>
    <scope>NUCLEOTIDE SEQUENCE [LARGE SCALE GENOMIC DNA]</scope>
    <source>
        <strain>ATCC 51449 / 3B1</strain>
    </source>
</reference>
<keyword id="KW-0378">Hydrolase</keyword>
<keyword id="KW-0441">Lipid A biosynthesis</keyword>
<keyword id="KW-0444">Lipid biosynthesis</keyword>
<keyword id="KW-0443">Lipid metabolism</keyword>
<keyword id="KW-0479">Metal-binding</keyword>
<keyword id="KW-1185">Reference proteome</keyword>
<keyword id="KW-0862">Zinc</keyword>
<proteinExistence type="inferred from homology"/>
<name>LPXC_HELHP</name>
<organism>
    <name type="scientific">Helicobacter hepaticus (strain ATCC 51449 / 3B1)</name>
    <dbReference type="NCBI Taxonomy" id="235279"/>
    <lineage>
        <taxon>Bacteria</taxon>
        <taxon>Pseudomonadati</taxon>
        <taxon>Campylobacterota</taxon>
        <taxon>Epsilonproteobacteria</taxon>
        <taxon>Campylobacterales</taxon>
        <taxon>Helicobacteraceae</taxon>
        <taxon>Helicobacter</taxon>
    </lineage>
</organism>
<protein>
    <recommendedName>
        <fullName evidence="1">UDP-3-O-acyl-N-acetylglucosamine deacetylase</fullName>
        <shortName evidence="1">UDP-3-O-acyl-GlcNAc deacetylase</shortName>
        <ecNumber evidence="1">3.5.1.108</ecNumber>
    </recommendedName>
    <alternativeName>
        <fullName evidence="1">UDP-3-O-[R-3-hydroxymyristoyl]-N-acetylglucosamine deacetylase</fullName>
    </alternativeName>
</protein>
<feature type="chain" id="PRO_0000253669" description="UDP-3-O-acyl-N-acetylglucosamine deacetylase">
    <location>
        <begin position="1"/>
        <end position="299"/>
    </location>
</feature>
<feature type="active site" description="Proton donor" evidence="1">
    <location>
        <position position="259"/>
    </location>
</feature>
<feature type="binding site" evidence="1">
    <location>
        <position position="75"/>
    </location>
    <ligand>
        <name>Zn(2+)</name>
        <dbReference type="ChEBI" id="CHEBI:29105"/>
    </ligand>
</feature>
<feature type="binding site" evidence="1">
    <location>
        <position position="232"/>
    </location>
    <ligand>
        <name>Zn(2+)</name>
        <dbReference type="ChEBI" id="CHEBI:29105"/>
    </ligand>
</feature>
<feature type="binding site" evidence="1">
    <location>
        <position position="236"/>
    </location>
    <ligand>
        <name>Zn(2+)</name>
        <dbReference type="ChEBI" id="CHEBI:29105"/>
    </ligand>
</feature>